<gene>
    <name type="primary">ptlH</name>
    <name type="ordered locus">BB4902</name>
</gene>
<evidence type="ECO:0000305" key="1"/>
<dbReference type="EMBL" id="BX640451">
    <property type="protein sequence ID" value="CAE35266.1"/>
    <property type="molecule type" value="Genomic_DNA"/>
</dbReference>
<dbReference type="RefSeq" id="WP_003815867.1">
    <property type="nucleotide sequence ID" value="NC_002927.3"/>
</dbReference>
<dbReference type="SMR" id="Q7WDT5"/>
<dbReference type="KEGG" id="bbr:BB4902"/>
<dbReference type="eggNOG" id="COG0630">
    <property type="taxonomic scope" value="Bacteria"/>
</dbReference>
<dbReference type="HOGENOM" id="CLU_005379_3_1_4"/>
<dbReference type="PHI-base" id="PHI:9187"/>
<dbReference type="Proteomes" id="UP000001027">
    <property type="component" value="Chromosome"/>
</dbReference>
<dbReference type="GO" id="GO:0043684">
    <property type="term" value="C:type IV secretion system complex"/>
    <property type="evidence" value="ECO:0007669"/>
    <property type="project" value="InterPro"/>
</dbReference>
<dbReference type="GO" id="GO:0016887">
    <property type="term" value="F:ATP hydrolysis activity"/>
    <property type="evidence" value="ECO:0007669"/>
    <property type="project" value="InterPro"/>
</dbReference>
<dbReference type="GO" id="GO:0044097">
    <property type="term" value="P:secretion by the type IV secretion system"/>
    <property type="evidence" value="ECO:0007669"/>
    <property type="project" value="InterPro"/>
</dbReference>
<dbReference type="CDD" id="cd01130">
    <property type="entry name" value="VirB11-like_ATPase"/>
    <property type="match status" value="1"/>
</dbReference>
<dbReference type="Gene3D" id="3.30.450.90">
    <property type="match status" value="1"/>
</dbReference>
<dbReference type="Gene3D" id="3.40.50.300">
    <property type="entry name" value="P-loop containing nucleotide triphosphate hydrolases"/>
    <property type="match status" value="1"/>
</dbReference>
<dbReference type="InterPro" id="IPR027417">
    <property type="entry name" value="P-loop_NTPase"/>
</dbReference>
<dbReference type="InterPro" id="IPR025662">
    <property type="entry name" value="Sigma_54_int_dom_ATP-bd_1"/>
</dbReference>
<dbReference type="InterPro" id="IPR001482">
    <property type="entry name" value="T2SS/T4SS_dom"/>
</dbReference>
<dbReference type="InterPro" id="IPR050921">
    <property type="entry name" value="T4SS_GSP_E_ATPase"/>
</dbReference>
<dbReference type="InterPro" id="IPR014155">
    <property type="entry name" value="VirB11"/>
</dbReference>
<dbReference type="NCBIfam" id="TIGR02788">
    <property type="entry name" value="VirB11"/>
    <property type="match status" value="1"/>
</dbReference>
<dbReference type="PANTHER" id="PTHR30486">
    <property type="entry name" value="TWITCHING MOTILITY PROTEIN PILT"/>
    <property type="match status" value="1"/>
</dbReference>
<dbReference type="PANTHER" id="PTHR30486:SF6">
    <property type="entry name" value="TYPE IV PILUS RETRACTATION ATPASE PILT"/>
    <property type="match status" value="1"/>
</dbReference>
<dbReference type="Pfam" id="PF00437">
    <property type="entry name" value="T2SSE"/>
    <property type="match status" value="1"/>
</dbReference>
<dbReference type="SUPFAM" id="SSF52540">
    <property type="entry name" value="P-loop containing nucleoside triphosphate hydrolases"/>
    <property type="match status" value="1"/>
</dbReference>
<proteinExistence type="inferred from homology"/>
<feature type="chain" id="PRO_0000287417" description="Type IV secretion system protein PtlH homolog">
    <location>
        <begin position="1"/>
        <end position="339"/>
    </location>
</feature>
<sequence>MNDAAPDRQASVDFHLQALHPWLSRQDIAEICVNRPGQLWYEDRNGWNRQESGALTLDHLHALATATARFCDRDICPERPLLAASLPGGERVQIVVPPACEPGTLSLTIRKPARRIWPLSELLRDALDLPGVPGASQARPDPLLDPWRRGAWDDFLRLAVQAGKAILVAGQTGSGKTTLMNALSGEIPPRERIVTIEDVRELRLDPATNHVHLLYGTPTEGRTAAVSATELLRAALRMAPTRILLAELRGGEAFDFLQACASGHSGGISTCHAASADMALQRLTLMCMQHPNCQMLPYSTLRALVESVIDIVVVVERRAGQGARRRVVDIWYRDGLPAP</sequence>
<name>PTLH_BORBR</name>
<organism>
    <name type="scientific">Bordetella bronchiseptica (strain ATCC BAA-588 / NCTC 13252 / RB50)</name>
    <name type="common">Alcaligenes bronchisepticus</name>
    <dbReference type="NCBI Taxonomy" id="257310"/>
    <lineage>
        <taxon>Bacteria</taxon>
        <taxon>Pseudomonadati</taxon>
        <taxon>Pseudomonadota</taxon>
        <taxon>Betaproteobacteria</taxon>
        <taxon>Burkholderiales</taxon>
        <taxon>Alcaligenaceae</taxon>
        <taxon>Bordetella</taxon>
    </lineage>
</organism>
<accession>Q7WDT5</accession>
<comment type="similarity">
    <text evidence="1">Belongs to the GSP E family.</text>
</comment>
<comment type="caution">
    <text evidence="1">B.parapertussis and B.bronchiseptica seem not to produce the pertussis toxin (S1, S2, S4, S5 and S3) and Ptl proteins (PtlA, PtlB, PtlC, PtlD, PtlE, PtlF, PtlG, PtlH and PtlI) in vivo due to changes in the promoter region of the ptx-ptl operon. However, it is possible that their promoter is active under certain, as-yet-undefined conditions and that B.parapertussis and B.bronchiseptica are therefore capable of producing these proteins.</text>
</comment>
<protein>
    <recommendedName>
        <fullName>Type IV secretion system protein PtlH homolog</fullName>
    </recommendedName>
</protein>
<reference key="1">
    <citation type="journal article" date="2003" name="Nat. Genet.">
        <title>Comparative analysis of the genome sequences of Bordetella pertussis, Bordetella parapertussis and Bordetella bronchiseptica.</title>
        <authorList>
            <person name="Parkhill J."/>
            <person name="Sebaihia M."/>
            <person name="Preston A."/>
            <person name="Murphy L.D."/>
            <person name="Thomson N.R."/>
            <person name="Harris D.E."/>
            <person name="Holden M.T.G."/>
            <person name="Churcher C.M."/>
            <person name="Bentley S.D."/>
            <person name="Mungall K.L."/>
            <person name="Cerdeno-Tarraga A.-M."/>
            <person name="Temple L."/>
            <person name="James K.D."/>
            <person name="Harris B."/>
            <person name="Quail M.A."/>
            <person name="Achtman M."/>
            <person name="Atkin R."/>
            <person name="Baker S."/>
            <person name="Basham D."/>
            <person name="Bason N."/>
            <person name="Cherevach I."/>
            <person name="Chillingworth T."/>
            <person name="Collins M."/>
            <person name="Cronin A."/>
            <person name="Davis P."/>
            <person name="Doggett J."/>
            <person name="Feltwell T."/>
            <person name="Goble A."/>
            <person name="Hamlin N."/>
            <person name="Hauser H."/>
            <person name="Holroyd S."/>
            <person name="Jagels K."/>
            <person name="Leather S."/>
            <person name="Moule S."/>
            <person name="Norberczak H."/>
            <person name="O'Neil S."/>
            <person name="Ormond D."/>
            <person name="Price C."/>
            <person name="Rabbinowitsch E."/>
            <person name="Rutter S."/>
            <person name="Sanders M."/>
            <person name="Saunders D."/>
            <person name="Seeger K."/>
            <person name="Sharp S."/>
            <person name="Simmonds M."/>
            <person name="Skelton J."/>
            <person name="Squares R."/>
            <person name="Squares S."/>
            <person name="Stevens K."/>
            <person name="Unwin L."/>
            <person name="Whitehead S."/>
            <person name="Barrell B.G."/>
            <person name="Maskell D.J."/>
        </authorList>
    </citation>
    <scope>NUCLEOTIDE SEQUENCE [LARGE SCALE GENOMIC DNA]</scope>
    <source>
        <strain>ATCC BAA-588 / NCTC 13252 / RB50</strain>
    </source>
</reference>
<reference key="2">
    <citation type="journal article" date="1987" name="J. Bacteriol.">
        <title>Bordetella parapertussis and Bordetella bronchiseptica contain transcriptionally silent pertussis toxin genes.</title>
        <authorList>
            <person name="Arico B."/>
            <person name="Rappuoli R."/>
        </authorList>
    </citation>
    <scope>TRANSCRIPTIONAL SILENCING</scope>
    <source>
        <strain>ATCC 4617 / NCIB 9935 / NCTC 8344 / NRRL B-140</strain>
    </source>
</reference>
<reference key="3">
    <citation type="journal article" date="1996" name="Infect. Immun.">
        <title>Analysis of proteins encoded by the ptx and ptl genes of Bordetella bronchiseptica and Bordetella parapertussis.</title>
        <authorList>
            <person name="Hausman S.Z."/>
            <person name="Cherry J.D."/>
            <person name="Heininger U."/>
            <person name="Wirsing von Koenig C.H."/>
            <person name="Burns D.L."/>
        </authorList>
    </citation>
    <scope>POSSIBLE EXPRESSION OF PTL AND PTX PROTEINS UNDER CONDITIONS DIFFERENT FROM B.PERTUSSIS EXPRESSION CONDITIONS</scope>
    <source>
        <strain>ATCC 31437 / Bb55</strain>
    </source>
</reference>